<keyword id="KW-0967">Endosome</keyword>
<keyword id="KW-0472">Membrane</keyword>
<keyword id="KW-0653">Protein transport</keyword>
<keyword id="KW-1185">Reference proteome</keyword>
<keyword id="KW-0677">Repeat</keyword>
<keyword id="KW-0813">Transport</keyword>
<feature type="chain" id="PRO_0000328677" description="AP-3 complex subunit beta">
    <location>
        <begin position="1"/>
        <end position="1108"/>
    </location>
</feature>
<feature type="repeat" description="HEAT 1">
    <location>
        <begin position="90"/>
        <end position="127"/>
    </location>
</feature>
<feature type="repeat" description="HEAT 2">
    <location>
        <begin position="327"/>
        <end position="363"/>
    </location>
</feature>
<feature type="repeat" description="HEAT 3">
    <location>
        <begin position="397"/>
        <end position="433"/>
    </location>
</feature>
<feature type="repeat" description="HEAT 4">
    <location>
        <begin position="434"/>
        <end position="471"/>
    </location>
</feature>
<feature type="region of interest" description="Disordered" evidence="2">
    <location>
        <begin position="480"/>
        <end position="501"/>
    </location>
</feature>
<feature type="region of interest" description="Disordered" evidence="2">
    <location>
        <begin position="736"/>
        <end position="797"/>
    </location>
</feature>
<feature type="region of interest" description="Disordered" evidence="2">
    <location>
        <begin position="811"/>
        <end position="835"/>
    </location>
</feature>
<feature type="compositionally biased region" description="Basic and acidic residues" evidence="2">
    <location>
        <begin position="480"/>
        <end position="490"/>
    </location>
</feature>
<feature type="compositionally biased region" description="Acidic residues" evidence="2">
    <location>
        <begin position="736"/>
        <end position="764"/>
    </location>
</feature>
<feature type="compositionally biased region" description="Acidic residues" evidence="2">
    <location>
        <begin position="780"/>
        <end position="797"/>
    </location>
</feature>
<accession>Q556J8</accession>
<accession>Q86AM8</accession>
<sequence length="1108" mass="126899">MDTVLNNINQSRYFNDSTANTKIEEIKKHLDSPSDADKLESMKKLIAMLSKGRDVSEAFPQVVKNVIVKNLEIKKLVYMYLVHYAESQNDSALLSINTIQKSLNDQSQVIRASALRVMSSIRVIDIIEVIILAIEKSVKDTSPFVRKAAAFAIAKVHKLDCDKQEPLIDLLEILLNDTSTMVLGAAIVAFNELCPQRFDLLHQHYRKICQLLADFDEWSQVIVLDILTKYARSQFRCPDSTMNDKNIKQFKKKSKSFYSDEEDQEDDEPENSLYKKKPLERDMFDSSEEIDMDHRLLLKSTLPLLQSRNNAVVMAVSSLYFYCAPSIEAQKVGKSLVRILRSGPEVQYITLTNISTMVTLRPSMFEPHLSEFFIHSSDPEYSIKLKLEILTRLATPENIGKILKEFKEYVKNEDKKFVAATIQAIGSCASTVPDVTESCIYGLMSLLSNQSTVVVAESVIVLKRLLQLNATNEKLEKLEKEKEKEKDVKENQSTISKHSSSNNSIKYDNIILHLSKLLDTLQVPSARASIVWVIGEYCYRVPLVAPDVFRKLVKSFSDEHESVKLETLNLGSKLYVQFTDNNSTTTTDNSIPNEFKNERTKEKITLMFQYVLNLAKFDQNYDIRDNSRMLKHFYFNTENTQSINSNIKQIVINQKPIPTETSISEDRQRFTLGSLSHIVNHTALGYTALPDFPDVAPDPSVREPIQRWIPNQQSQQQQHQQQQLNNIFVDTPFYSDEEEEDEEEYDEEEEEEEYEEQNEYEDFFGEEKKNKKKNRKQQNYDEDEYNQDIDDGEYDGEGEVQAEDEDDFDELFGITNDDNNQTANGIGGGGSGEEEMDKFDFENYINSTTKSVKKILLKPTISGGLSIDYCFIRIRDNEEFSCQPRYNIIQLNIKNQSDETFTDISIINKNLIDGADISEFDPIESIEPNQAIQKQIYVLFNSTSQSCKFEISFNKGNFPVTLTPIIGELLIPIVPIYESISQWKDEFEEVGEFKQVDDQFEFGDQCLDKLNNNNNNNNNNNNESGDENIGLMPILPIVLEGINLIPIASNKLKSKIQFASKTLLKDENIYVQIQLLKQQPPTVNCIIRSNDQVVSALLLKKLKDVLQK</sequence>
<organism>
    <name type="scientific">Dictyostelium discoideum</name>
    <name type="common">Social amoeba</name>
    <dbReference type="NCBI Taxonomy" id="44689"/>
    <lineage>
        <taxon>Eukaryota</taxon>
        <taxon>Amoebozoa</taxon>
        <taxon>Evosea</taxon>
        <taxon>Eumycetozoa</taxon>
        <taxon>Dictyostelia</taxon>
        <taxon>Dictyosteliales</taxon>
        <taxon>Dictyosteliaceae</taxon>
        <taxon>Dictyostelium</taxon>
    </lineage>
</organism>
<name>AP3B_DICDI</name>
<gene>
    <name type="primary">ap3b-1</name>
    <name type="ORF">DDB_G0272578</name>
</gene>
<gene>
    <name type="primary">ap3b-2</name>
    <name type="ORF">DDB_G0274003</name>
</gene>
<reference key="1">
    <citation type="journal article" date="2002" name="Nature">
        <title>Sequence and analysis of chromosome 2 of Dictyostelium discoideum.</title>
        <authorList>
            <person name="Gloeckner G."/>
            <person name="Eichinger L."/>
            <person name="Szafranski K."/>
            <person name="Pachebat J.A."/>
            <person name="Bankier A.T."/>
            <person name="Dear P.H."/>
            <person name="Lehmann R."/>
            <person name="Baumgart C."/>
            <person name="Parra G."/>
            <person name="Abril J.F."/>
            <person name="Guigo R."/>
            <person name="Kumpf K."/>
            <person name="Tunggal B."/>
            <person name="Cox E.C."/>
            <person name="Quail M.A."/>
            <person name="Platzer M."/>
            <person name="Rosenthal A."/>
            <person name="Noegel A.A."/>
        </authorList>
    </citation>
    <scope>NUCLEOTIDE SEQUENCE [LARGE SCALE GENOMIC DNA]</scope>
    <source>
        <strain>AX4</strain>
    </source>
</reference>
<reference key="2">
    <citation type="journal article" date="2005" name="Nature">
        <title>The genome of the social amoeba Dictyostelium discoideum.</title>
        <authorList>
            <person name="Eichinger L."/>
            <person name="Pachebat J.A."/>
            <person name="Gloeckner G."/>
            <person name="Rajandream M.A."/>
            <person name="Sucgang R."/>
            <person name="Berriman M."/>
            <person name="Song J."/>
            <person name="Olsen R."/>
            <person name="Szafranski K."/>
            <person name="Xu Q."/>
            <person name="Tunggal B."/>
            <person name="Kummerfeld S."/>
            <person name="Madera M."/>
            <person name="Konfortov B.A."/>
            <person name="Rivero F."/>
            <person name="Bankier A.T."/>
            <person name="Lehmann R."/>
            <person name="Hamlin N."/>
            <person name="Davies R."/>
            <person name="Gaudet P."/>
            <person name="Fey P."/>
            <person name="Pilcher K."/>
            <person name="Chen G."/>
            <person name="Saunders D."/>
            <person name="Sodergren E.J."/>
            <person name="Davis P."/>
            <person name="Kerhornou A."/>
            <person name="Nie X."/>
            <person name="Hall N."/>
            <person name="Anjard C."/>
            <person name="Hemphill L."/>
            <person name="Bason N."/>
            <person name="Farbrother P."/>
            <person name="Desany B."/>
            <person name="Just E."/>
            <person name="Morio T."/>
            <person name="Rost R."/>
            <person name="Churcher C.M."/>
            <person name="Cooper J."/>
            <person name="Haydock S."/>
            <person name="van Driessche N."/>
            <person name="Cronin A."/>
            <person name="Goodhead I."/>
            <person name="Muzny D.M."/>
            <person name="Mourier T."/>
            <person name="Pain A."/>
            <person name="Lu M."/>
            <person name="Harper D."/>
            <person name="Lindsay R."/>
            <person name="Hauser H."/>
            <person name="James K.D."/>
            <person name="Quiles M."/>
            <person name="Madan Babu M."/>
            <person name="Saito T."/>
            <person name="Buchrieser C."/>
            <person name="Wardroper A."/>
            <person name="Felder M."/>
            <person name="Thangavelu M."/>
            <person name="Johnson D."/>
            <person name="Knights A."/>
            <person name="Loulseged H."/>
            <person name="Mungall K.L."/>
            <person name="Oliver K."/>
            <person name="Price C."/>
            <person name="Quail M.A."/>
            <person name="Urushihara H."/>
            <person name="Hernandez J."/>
            <person name="Rabbinowitsch E."/>
            <person name="Steffen D."/>
            <person name="Sanders M."/>
            <person name="Ma J."/>
            <person name="Kohara Y."/>
            <person name="Sharp S."/>
            <person name="Simmonds M.N."/>
            <person name="Spiegler S."/>
            <person name="Tivey A."/>
            <person name="Sugano S."/>
            <person name="White B."/>
            <person name="Walker D."/>
            <person name="Woodward J.R."/>
            <person name="Winckler T."/>
            <person name="Tanaka Y."/>
            <person name="Shaulsky G."/>
            <person name="Schleicher M."/>
            <person name="Weinstock G.M."/>
            <person name="Rosenthal A."/>
            <person name="Cox E.C."/>
            <person name="Chisholm R.L."/>
            <person name="Gibbs R.A."/>
            <person name="Loomis W.F."/>
            <person name="Platzer M."/>
            <person name="Kay R.R."/>
            <person name="Williams J.G."/>
            <person name="Dear P.H."/>
            <person name="Noegel A.A."/>
            <person name="Barrell B.G."/>
            <person name="Kuspa A."/>
        </authorList>
    </citation>
    <scope>NUCLEOTIDE SEQUENCE [LARGE SCALE GENOMIC DNA]</scope>
    <source>
        <strain>AX4</strain>
    </source>
</reference>
<proteinExistence type="inferred from homology"/>
<comment type="function">
    <text>Part of the AP-3 complex, an adaptor-related complex which is essential for the compartmentalization of the endocytic pathway.</text>
</comment>
<comment type="subunit">
    <text evidence="1">Adaptor protein complex 3 (AP-3) is a heterotetramer composed of two large adaptins (delta-type subunit and beta-type subunit), a medium adaptin (mu-type subunit) and a small adaptin (sigma-type subunit).</text>
</comment>
<comment type="subcellular location">
    <subcellularLocation>
        <location evidence="1">Endosome membrane</location>
    </subcellularLocation>
</comment>
<comment type="similarity">
    <text evidence="3">Belongs to the adaptor complexes large subunit family.</text>
</comment>
<comment type="caution">
    <text evidence="3">The gene for this protein is duplicated in strains AX3 and AX4. These strains contain a duplication of a segment of 750 kb of chromosome 2 compared to the corresponding sequence in strain AX2.</text>
</comment>
<evidence type="ECO:0000250" key="1"/>
<evidence type="ECO:0000256" key="2">
    <source>
        <dbReference type="SAM" id="MobiDB-lite"/>
    </source>
</evidence>
<evidence type="ECO:0000305" key="3"/>
<dbReference type="EMBL" id="AAFI02000011">
    <property type="protein sequence ID" value="EAL70435.1"/>
    <property type="molecule type" value="Genomic_DNA"/>
</dbReference>
<dbReference type="EMBL" id="AAFI02000009">
    <property type="protein sequence ID" value="EAL70926.1"/>
    <property type="molecule type" value="Genomic_DNA"/>
</dbReference>
<dbReference type="RefSeq" id="XP_644360.1">
    <property type="nucleotide sequence ID" value="XM_639268.1"/>
</dbReference>
<dbReference type="RefSeq" id="XP_645054.1">
    <property type="nucleotide sequence ID" value="XM_639962.1"/>
</dbReference>
<dbReference type="SMR" id="Q556J8"/>
<dbReference type="FunCoup" id="Q556J8">
    <property type="interactions" value="320"/>
</dbReference>
<dbReference type="STRING" id="44689.Q556J8"/>
<dbReference type="PaxDb" id="44689-DDB0237724"/>
<dbReference type="EnsemblProtists" id="EAL70435">
    <property type="protein sequence ID" value="EAL70435"/>
    <property type="gene ID" value="DDB_G0274003"/>
</dbReference>
<dbReference type="EnsemblProtists" id="EAL70926">
    <property type="protein sequence ID" value="EAL70926"/>
    <property type="gene ID" value="DDB_G0272578"/>
</dbReference>
<dbReference type="GeneID" id="8618729"/>
<dbReference type="GeneID" id="8619247"/>
<dbReference type="KEGG" id="ddi:DDB_G0272578"/>
<dbReference type="KEGG" id="ddi:DDB_G0274003"/>
<dbReference type="dictyBase" id="DDB_G0272578">
    <property type="gene designation" value="ap3b-1"/>
</dbReference>
<dbReference type="dictyBase" id="DDB_G0274003">
    <property type="gene designation" value="ap3b-2"/>
</dbReference>
<dbReference type="VEuPathDB" id="AmoebaDB:DDB_G0274003"/>
<dbReference type="eggNOG" id="KOG1060">
    <property type="taxonomic scope" value="Eukaryota"/>
</dbReference>
<dbReference type="HOGENOM" id="CLU_006320_3_1_1"/>
<dbReference type="InParanoid" id="Q556J8"/>
<dbReference type="OMA" id="HFLVRST"/>
<dbReference type="PhylomeDB" id="Q556J8"/>
<dbReference type="PRO" id="PR:Q556J8"/>
<dbReference type="Proteomes" id="UP000002195">
    <property type="component" value="Chromosome 2"/>
</dbReference>
<dbReference type="GO" id="GO:0030123">
    <property type="term" value="C:AP-3 adaptor complex"/>
    <property type="evidence" value="ECO:0000314"/>
    <property type="project" value="dictyBase"/>
</dbReference>
<dbReference type="GO" id="GO:0010008">
    <property type="term" value="C:endosome membrane"/>
    <property type="evidence" value="ECO:0007669"/>
    <property type="project" value="UniProtKB-SubCell"/>
</dbReference>
<dbReference type="GO" id="GO:0006886">
    <property type="term" value="P:intracellular protein transport"/>
    <property type="evidence" value="ECO:0007669"/>
    <property type="project" value="InterPro"/>
</dbReference>
<dbReference type="GO" id="GO:0016192">
    <property type="term" value="P:vesicle-mediated transport"/>
    <property type="evidence" value="ECO:0007669"/>
    <property type="project" value="InterPro"/>
</dbReference>
<dbReference type="Gene3D" id="1.25.10.10">
    <property type="entry name" value="Leucine-rich Repeat Variant"/>
    <property type="match status" value="1"/>
</dbReference>
<dbReference type="InterPro" id="IPR026740">
    <property type="entry name" value="AP3_beta"/>
</dbReference>
<dbReference type="InterPro" id="IPR029390">
    <property type="entry name" value="AP3B_C"/>
</dbReference>
<dbReference type="InterPro" id="IPR026739">
    <property type="entry name" value="AP_beta"/>
</dbReference>
<dbReference type="InterPro" id="IPR011989">
    <property type="entry name" value="ARM-like"/>
</dbReference>
<dbReference type="InterPro" id="IPR016024">
    <property type="entry name" value="ARM-type_fold"/>
</dbReference>
<dbReference type="InterPro" id="IPR002553">
    <property type="entry name" value="Clathrin/coatomer_adapt-like_N"/>
</dbReference>
<dbReference type="PANTHER" id="PTHR11134">
    <property type="entry name" value="ADAPTOR COMPLEX SUBUNIT BETA FAMILY MEMBER"/>
    <property type="match status" value="1"/>
</dbReference>
<dbReference type="Pfam" id="PF01602">
    <property type="entry name" value="Adaptin_N"/>
    <property type="match status" value="2"/>
</dbReference>
<dbReference type="Pfam" id="PF14796">
    <property type="entry name" value="AP3B1_C"/>
    <property type="match status" value="1"/>
</dbReference>
<dbReference type="PIRSF" id="PIRSF037096">
    <property type="entry name" value="AP3_complex_beta"/>
    <property type="match status" value="1"/>
</dbReference>
<dbReference type="SMART" id="SM01355">
    <property type="entry name" value="AP3B1_C"/>
    <property type="match status" value="1"/>
</dbReference>
<dbReference type="SUPFAM" id="SSF48371">
    <property type="entry name" value="ARM repeat"/>
    <property type="match status" value="1"/>
</dbReference>
<protein>
    <recommendedName>
        <fullName>AP-3 complex subunit beta</fullName>
    </recommendedName>
    <alternativeName>
        <fullName>Adaptor protein complex AP-3 beta subunit</fullName>
    </alternativeName>
    <alternativeName>
        <fullName>Adaptor-related protein complex 3 subunit beta</fullName>
    </alternativeName>
    <alternativeName>
        <fullName>Beta-3-adaptin</fullName>
    </alternativeName>
    <alternativeName>
        <fullName>Clathrin assembly protein complex 3 beta large chain</fullName>
    </alternativeName>
</protein>